<protein>
    <recommendedName>
        <fullName>Probable WRKY transcription factor 15</fullName>
    </recommendedName>
    <alternativeName>
        <fullName>WRKY DNA-binding protein 15</fullName>
    </alternativeName>
</protein>
<organism>
    <name type="scientific">Arabidopsis thaliana</name>
    <name type="common">Mouse-ear cress</name>
    <dbReference type="NCBI Taxonomy" id="3702"/>
    <lineage>
        <taxon>Eukaryota</taxon>
        <taxon>Viridiplantae</taxon>
        <taxon>Streptophyta</taxon>
        <taxon>Embryophyta</taxon>
        <taxon>Tracheophyta</taxon>
        <taxon>Spermatophyta</taxon>
        <taxon>Magnoliopsida</taxon>
        <taxon>eudicotyledons</taxon>
        <taxon>Gunneridae</taxon>
        <taxon>Pentapetalae</taxon>
        <taxon>rosids</taxon>
        <taxon>malvids</taxon>
        <taxon>Brassicales</taxon>
        <taxon>Brassicaceae</taxon>
        <taxon>Camelineae</taxon>
        <taxon>Arabidopsis</taxon>
    </lineage>
</organism>
<keyword id="KW-0025">Alternative splicing</keyword>
<keyword id="KW-0238">DNA-binding</keyword>
<keyword id="KW-0539">Nucleus</keyword>
<keyword id="KW-1185">Reference proteome</keyword>
<keyword id="KW-0804">Transcription</keyword>
<keyword id="KW-0805">Transcription regulation</keyword>
<evidence type="ECO:0000250" key="1"/>
<evidence type="ECO:0000255" key="2">
    <source>
        <dbReference type="PROSITE-ProRule" id="PRU00223"/>
    </source>
</evidence>
<evidence type="ECO:0000256" key="3">
    <source>
        <dbReference type="SAM" id="MobiDB-lite"/>
    </source>
</evidence>
<evidence type="ECO:0000269" key="4">
    <source>
    </source>
</evidence>
<evidence type="ECO:0000305" key="5"/>
<reference key="1">
    <citation type="journal article" date="2001" name="Plant Cell">
        <title>Evidence for an important role of WRKY DNA binding proteins in the regulation of NPR1 gene expression.</title>
        <authorList>
            <person name="Yu D."/>
            <person name="Chen C."/>
            <person name="Chen Z."/>
        </authorList>
    </citation>
    <scope>NUCLEOTIDE SEQUENCE</scope>
    <scope>INDUCTION</scope>
</reference>
<reference key="2">
    <citation type="journal article" date="1999" name="Nature">
        <title>Sequence and analysis of chromosome 2 of the plant Arabidopsis thaliana.</title>
        <authorList>
            <person name="Lin X."/>
            <person name="Kaul S."/>
            <person name="Rounsley S.D."/>
            <person name="Shea T.P."/>
            <person name="Benito M.-I."/>
            <person name="Town C.D."/>
            <person name="Fujii C.Y."/>
            <person name="Mason T.M."/>
            <person name="Bowman C.L."/>
            <person name="Barnstead M.E."/>
            <person name="Feldblyum T.V."/>
            <person name="Buell C.R."/>
            <person name="Ketchum K.A."/>
            <person name="Lee J.J."/>
            <person name="Ronning C.M."/>
            <person name="Koo H.L."/>
            <person name="Moffat K.S."/>
            <person name="Cronin L.A."/>
            <person name="Shen M."/>
            <person name="Pai G."/>
            <person name="Van Aken S."/>
            <person name="Umayam L."/>
            <person name="Tallon L.J."/>
            <person name="Gill J.E."/>
            <person name="Adams M.D."/>
            <person name="Carrera A.J."/>
            <person name="Creasy T.H."/>
            <person name="Goodman H.M."/>
            <person name="Somerville C.R."/>
            <person name="Copenhaver G.P."/>
            <person name="Preuss D."/>
            <person name="Nierman W.C."/>
            <person name="White O."/>
            <person name="Eisen J.A."/>
            <person name="Salzberg S.L."/>
            <person name="Fraser C.M."/>
            <person name="Venter J.C."/>
        </authorList>
    </citation>
    <scope>NUCLEOTIDE SEQUENCE [LARGE SCALE GENOMIC DNA]</scope>
    <source>
        <strain>cv. Columbia</strain>
    </source>
</reference>
<reference key="3">
    <citation type="journal article" date="2017" name="Plant J.">
        <title>Araport11: a complete reannotation of the Arabidopsis thaliana reference genome.</title>
        <authorList>
            <person name="Cheng C.Y."/>
            <person name="Krishnakumar V."/>
            <person name="Chan A.P."/>
            <person name="Thibaud-Nissen F."/>
            <person name="Schobel S."/>
            <person name="Town C.D."/>
        </authorList>
    </citation>
    <scope>GENOME REANNOTATION</scope>
    <source>
        <strain>cv. Columbia</strain>
    </source>
</reference>
<reference key="4">
    <citation type="journal article" date="2003" name="Science">
        <title>Empirical analysis of transcriptional activity in the Arabidopsis genome.</title>
        <authorList>
            <person name="Yamada K."/>
            <person name="Lim J."/>
            <person name="Dale J.M."/>
            <person name="Chen H."/>
            <person name="Shinn P."/>
            <person name="Palm C.J."/>
            <person name="Southwick A.M."/>
            <person name="Wu H.C."/>
            <person name="Kim C.J."/>
            <person name="Nguyen M."/>
            <person name="Pham P.K."/>
            <person name="Cheuk R.F."/>
            <person name="Karlin-Newmann G."/>
            <person name="Liu S.X."/>
            <person name="Lam B."/>
            <person name="Sakano H."/>
            <person name="Wu T."/>
            <person name="Yu G."/>
            <person name="Miranda M."/>
            <person name="Quach H.L."/>
            <person name="Tripp M."/>
            <person name="Chang C.H."/>
            <person name="Lee J.M."/>
            <person name="Toriumi M.J."/>
            <person name="Chan M.M."/>
            <person name="Tang C.C."/>
            <person name="Onodera C.S."/>
            <person name="Deng J.M."/>
            <person name="Akiyama K."/>
            <person name="Ansari Y."/>
            <person name="Arakawa T."/>
            <person name="Banh J."/>
            <person name="Banno F."/>
            <person name="Bowser L."/>
            <person name="Brooks S.Y."/>
            <person name="Carninci P."/>
            <person name="Chao Q."/>
            <person name="Choy N."/>
            <person name="Enju A."/>
            <person name="Goldsmith A.D."/>
            <person name="Gurjal M."/>
            <person name="Hansen N.F."/>
            <person name="Hayashizaki Y."/>
            <person name="Johnson-Hopson C."/>
            <person name="Hsuan V.W."/>
            <person name="Iida K."/>
            <person name="Karnes M."/>
            <person name="Khan S."/>
            <person name="Koesema E."/>
            <person name="Ishida J."/>
            <person name="Jiang P.X."/>
            <person name="Jones T."/>
            <person name="Kawai J."/>
            <person name="Kamiya A."/>
            <person name="Meyers C."/>
            <person name="Nakajima M."/>
            <person name="Narusaka M."/>
            <person name="Seki M."/>
            <person name="Sakurai T."/>
            <person name="Satou M."/>
            <person name="Tamse R."/>
            <person name="Vaysberg M."/>
            <person name="Wallender E.K."/>
            <person name="Wong C."/>
            <person name="Yamamura Y."/>
            <person name="Yuan S."/>
            <person name="Shinozaki K."/>
            <person name="Davis R.W."/>
            <person name="Theologis A."/>
            <person name="Ecker J.R."/>
        </authorList>
    </citation>
    <scope>NUCLEOTIDE SEQUENCE [LARGE SCALE MRNA]</scope>
    <source>
        <strain>cv. Columbia</strain>
    </source>
</reference>
<proteinExistence type="evidence at transcript level"/>
<gene>
    <name type="primary">WRKY15</name>
    <name type="ordered locus">At2g23320</name>
    <name type="ORF">T20D16.5</name>
</gene>
<sequence length="317" mass="34264">MAVELMTRNYISGVGADSFAVQEAAASGLKSIENFIGLMSRDSFNSDQPSSSSASASASAAADLESARNTTADAAVSKFKRVISLLDRTRTGHARFRRAPVHVISPVLLQEEPKTTPFQSPLPPPPQMIRKGSFSSSMKTIDFSSLSSVTTESDNQKKIHHHQRPSETAPFASQTQSLSTTVSSFSKSTKRKCNSENLLTGKCASASSSGRCHCSKKRKIKQRRIIRVPAISAKMSDVPPDDYSWRKYGQKPIKGSPHPRGYYKCSSVRGCPARKHVERAADDSSMLIVTYEGDHNHSLSAADLAGAAVADLILESS</sequence>
<comment type="function">
    <text evidence="1">Transcription factor. Interacts specifically with the W box (5'-(T)TGAC[CT]-3'), a frequently occurring elicitor-responsive cis-acting element (By similarity).</text>
</comment>
<comment type="subcellular location">
    <subcellularLocation>
        <location evidence="5">Nucleus</location>
    </subcellularLocation>
</comment>
<comment type="alternative products">
    <event type="alternative splicing"/>
    <isoform>
        <id>O22176-1</id>
        <name>1</name>
        <sequence type="displayed"/>
    </isoform>
    <text>A number of isoforms are produced. According to EST sequences.</text>
</comment>
<comment type="induction">
    <text evidence="4">By salicylic acid.</text>
</comment>
<comment type="similarity">
    <text evidence="5">Belongs to the WRKY group II-d family.</text>
</comment>
<name>WRK15_ARATH</name>
<accession>O22176</accession>
<feature type="chain" id="PRO_0000133657" description="Probable WRKY transcription factor 15">
    <location>
        <begin position="1"/>
        <end position="317"/>
    </location>
</feature>
<feature type="DNA-binding region" description="WRKY" evidence="2">
    <location>
        <begin position="234"/>
        <end position="300"/>
    </location>
</feature>
<feature type="region of interest" description="Disordered" evidence="3">
    <location>
        <begin position="145"/>
        <end position="186"/>
    </location>
</feature>
<feature type="compositionally biased region" description="Low complexity" evidence="3">
    <location>
        <begin position="173"/>
        <end position="186"/>
    </location>
</feature>
<dbReference type="EMBL" id="AF224704">
    <property type="protein sequence ID" value="AAK28314.1"/>
    <property type="molecule type" value="mRNA"/>
</dbReference>
<dbReference type="EMBL" id="AC002391">
    <property type="protein sequence ID" value="AAB87100.1"/>
    <property type="molecule type" value="Genomic_DNA"/>
</dbReference>
<dbReference type="EMBL" id="CP002685">
    <property type="protein sequence ID" value="AEC07441.1"/>
    <property type="molecule type" value="Genomic_DNA"/>
</dbReference>
<dbReference type="EMBL" id="AF370194">
    <property type="protein sequence ID" value="AAK44009.1"/>
    <property type="molecule type" value="mRNA"/>
</dbReference>
<dbReference type="EMBL" id="AY062950">
    <property type="protein sequence ID" value="AAL33782.1"/>
    <property type="molecule type" value="mRNA"/>
</dbReference>
<dbReference type="PIR" id="T00500">
    <property type="entry name" value="T00500"/>
</dbReference>
<dbReference type="RefSeq" id="NP_179913.1">
    <molecule id="O22176-1"/>
    <property type="nucleotide sequence ID" value="NM_127896.3"/>
</dbReference>
<dbReference type="SMR" id="O22176"/>
<dbReference type="BioGRID" id="2216">
    <property type="interactions" value="2"/>
</dbReference>
<dbReference type="FunCoup" id="O22176">
    <property type="interactions" value="15"/>
</dbReference>
<dbReference type="IntAct" id="O22176">
    <property type="interactions" value="1"/>
</dbReference>
<dbReference type="MINT" id="O22176"/>
<dbReference type="STRING" id="3702.O22176"/>
<dbReference type="iPTMnet" id="O22176"/>
<dbReference type="PaxDb" id="3702-AT2G23320.1"/>
<dbReference type="ProteomicsDB" id="234412">
    <molecule id="O22176-1"/>
</dbReference>
<dbReference type="EnsemblPlants" id="AT2G23320.1">
    <molecule id="O22176-1"/>
    <property type="protein sequence ID" value="AT2G23320.1"/>
    <property type="gene ID" value="AT2G23320"/>
</dbReference>
<dbReference type="GeneID" id="816864"/>
<dbReference type="Gramene" id="AT2G23320.1">
    <molecule id="O22176-1"/>
    <property type="protein sequence ID" value="AT2G23320.1"/>
    <property type="gene ID" value="AT2G23320"/>
</dbReference>
<dbReference type="KEGG" id="ath:AT2G23320"/>
<dbReference type="Araport" id="AT2G23320"/>
<dbReference type="TAIR" id="AT2G23320">
    <property type="gene designation" value="WRKY15"/>
</dbReference>
<dbReference type="eggNOG" id="ENOG502QU4H">
    <property type="taxonomic scope" value="Eukaryota"/>
</dbReference>
<dbReference type="HOGENOM" id="CLU_040478_1_0_1"/>
<dbReference type="InParanoid" id="O22176"/>
<dbReference type="PhylomeDB" id="O22176"/>
<dbReference type="PRO" id="PR:O22176"/>
<dbReference type="Proteomes" id="UP000006548">
    <property type="component" value="Chromosome 2"/>
</dbReference>
<dbReference type="ExpressionAtlas" id="O22176">
    <property type="expression patterns" value="baseline and differential"/>
</dbReference>
<dbReference type="GO" id="GO:0005634">
    <property type="term" value="C:nucleus"/>
    <property type="evidence" value="ECO:0000314"/>
    <property type="project" value="TAIR"/>
</dbReference>
<dbReference type="GO" id="GO:0005516">
    <property type="term" value="F:calmodulin binding"/>
    <property type="evidence" value="ECO:0000314"/>
    <property type="project" value="TAIR"/>
</dbReference>
<dbReference type="GO" id="GO:0003700">
    <property type="term" value="F:DNA-binding transcription factor activity"/>
    <property type="evidence" value="ECO:0000250"/>
    <property type="project" value="TAIR"/>
</dbReference>
<dbReference type="GO" id="GO:0000976">
    <property type="term" value="F:transcription cis-regulatory region binding"/>
    <property type="evidence" value="ECO:0000353"/>
    <property type="project" value="TAIR"/>
</dbReference>
<dbReference type="FunFam" id="2.20.25.80:FF:000004">
    <property type="entry name" value="WRKY transcription factor 65"/>
    <property type="match status" value="1"/>
</dbReference>
<dbReference type="Gene3D" id="2.20.25.80">
    <property type="entry name" value="WRKY domain"/>
    <property type="match status" value="1"/>
</dbReference>
<dbReference type="InterPro" id="IPR003657">
    <property type="entry name" value="WRKY_dom"/>
</dbReference>
<dbReference type="InterPro" id="IPR036576">
    <property type="entry name" value="WRKY_dom_sf"/>
</dbReference>
<dbReference type="InterPro" id="IPR044810">
    <property type="entry name" value="WRKY_plant"/>
</dbReference>
<dbReference type="InterPro" id="IPR018872">
    <property type="entry name" value="Zn-cluster-dom"/>
</dbReference>
<dbReference type="PANTHER" id="PTHR31282">
    <property type="entry name" value="WRKY TRANSCRIPTION FACTOR 21-RELATED"/>
    <property type="match status" value="1"/>
</dbReference>
<dbReference type="Pfam" id="PF10533">
    <property type="entry name" value="Plant_zn_clust"/>
    <property type="match status" value="1"/>
</dbReference>
<dbReference type="Pfam" id="PF03106">
    <property type="entry name" value="WRKY"/>
    <property type="match status" value="1"/>
</dbReference>
<dbReference type="SMART" id="SM00774">
    <property type="entry name" value="WRKY"/>
    <property type="match status" value="1"/>
</dbReference>
<dbReference type="SUPFAM" id="SSF118290">
    <property type="entry name" value="WRKY DNA-binding domain"/>
    <property type="match status" value="1"/>
</dbReference>
<dbReference type="PROSITE" id="PS50811">
    <property type="entry name" value="WRKY"/>
    <property type="match status" value="1"/>
</dbReference>